<sequence length="288" mass="32759">MAEYSGLTKTSSALPRLSSKRTYSLMRAEAPSESVPYYSYCLRLRRLVLIFVNPLYFMRYRNWLAQDDTLSELLELINRQLTEKGLKVEKASAAVVDATIIQTAGSKQRQAIEVDEEGQISGQTTPSKDKDARWIKKNGLYKLGYKQHTRTDAEGYTEKLHITPANAHECKHLPPLLEGLPKGTTVYADKGYDSAENRQHLKEHQLQDGIMRKACRNRPLTETQTKRNRYLSKTRYVVEQSFGTLHRKFRYARAAYFGLIKVSAQSHLKAMCLNLLKAANRLSAPASA</sequence>
<accession>Q00840</accession>
<comment type="function">
    <text>Involved in the transposition of the insertion sequence.</text>
</comment>
<comment type="similarity">
    <text evidence="1">Belongs to the transposase 11 family.</text>
</comment>
<name>T1106_NEIMI</name>
<protein>
    <recommendedName>
        <fullName>Transposase for insertion sequence element IS1106</fullName>
    </recommendedName>
    <alternativeName>
        <fullName>ORF 1</fullName>
    </alternativeName>
</protein>
<evidence type="ECO:0000305" key="1"/>
<keyword id="KW-0233">DNA recombination</keyword>
<keyword id="KW-0238">DNA-binding</keyword>
<keyword id="KW-0814">Transposable element</keyword>
<keyword id="KW-0815">Transposition</keyword>
<reference key="1">
    <citation type="journal article" date="1992" name="Mol. Microbiol.">
        <title>Identification and characterization of a novel insertion sequence, IS1106, downstream of the porA gene in B15 Neisseria meningitidis.</title>
        <authorList>
            <person name="Knight A.I."/>
            <person name="Ni H."/>
            <person name="Cartwright K.A.V."/>
            <person name="McFadden J."/>
        </authorList>
    </citation>
    <scope>NUCLEOTIDE SEQUENCE [GENOMIC DNA]</scope>
    <source>
        <strain>B15 / Serogroup B / Serotype 1</strain>
    </source>
</reference>
<proteinExistence type="inferred from homology"/>
<feature type="chain" id="PRO_0000173301" description="Transposase for insertion sequence element IS1106">
    <location>
        <begin position="1"/>
        <end position="288"/>
    </location>
</feature>
<organism>
    <name type="scientific">Neisseria meningitidis serogroup B</name>
    <dbReference type="NCBI Taxonomy" id="491"/>
    <lineage>
        <taxon>Bacteria</taxon>
        <taxon>Pseudomonadati</taxon>
        <taxon>Pseudomonadota</taxon>
        <taxon>Betaproteobacteria</taxon>
        <taxon>Neisseriales</taxon>
        <taxon>Neisseriaceae</taxon>
        <taxon>Neisseria</taxon>
    </lineage>
</organism>
<dbReference type="EMBL" id="Z11857">
    <property type="protein sequence ID" value="CAA77879.1"/>
    <property type="molecule type" value="Genomic_DNA"/>
</dbReference>
<dbReference type="PIR" id="S22628">
    <property type="entry name" value="S22628"/>
</dbReference>
<dbReference type="GO" id="GO:0003677">
    <property type="term" value="F:DNA binding"/>
    <property type="evidence" value="ECO:0007669"/>
    <property type="project" value="UniProtKB-KW"/>
</dbReference>
<dbReference type="GO" id="GO:0004803">
    <property type="term" value="F:transposase activity"/>
    <property type="evidence" value="ECO:0007669"/>
    <property type="project" value="InterPro"/>
</dbReference>
<dbReference type="GO" id="GO:0006313">
    <property type="term" value="P:DNA transposition"/>
    <property type="evidence" value="ECO:0007669"/>
    <property type="project" value="InterPro"/>
</dbReference>
<dbReference type="InterPro" id="IPR047959">
    <property type="entry name" value="Transpos_IS5"/>
</dbReference>
<dbReference type="InterPro" id="IPR002559">
    <property type="entry name" value="Transposase_11"/>
</dbReference>
<dbReference type="NCBIfam" id="NF033581">
    <property type="entry name" value="transpos_IS5_4"/>
    <property type="match status" value="1"/>
</dbReference>
<dbReference type="PANTHER" id="PTHR35604">
    <property type="entry name" value="TRANSPOSASE INSH FOR INSERTION SEQUENCE ELEMENT IS5A-RELATED"/>
    <property type="match status" value="1"/>
</dbReference>
<dbReference type="PANTHER" id="PTHR35604:SF2">
    <property type="entry name" value="TRANSPOSASE INSH FOR INSERTION SEQUENCE ELEMENT IS5A-RELATED"/>
    <property type="match status" value="1"/>
</dbReference>
<dbReference type="Pfam" id="PF01609">
    <property type="entry name" value="DDE_Tnp_1"/>
    <property type="match status" value="1"/>
</dbReference>